<organism>
    <name type="scientific">Medicago sativa</name>
    <name type="common">Alfalfa</name>
    <dbReference type="NCBI Taxonomy" id="3879"/>
    <lineage>
        <taxon>Eukaryota</taxon>
        <taxon>Viridiplantae</taxon>
        <taxon>Streptophyta</taxon>
        <taxon>Embryophyta</taxon>
        <taxon>Tracheophyta</taxon>
        <taxon>Spermatophyta</taxon>
        <taxon>Magnoliopsida</taxon>
        <taxon>eudicotyledons</taxon>
        <taxon>Gunneridae</taxon>
        <taxon>Pentapetalae</taxon>
        <taxon>rosids</taxon>
        <taxon>fabids</taxon>
        <taxon>Fabales</taxon>
        <taxon>Fabaceae</taxon>
        <taxon>Papilionoideae</taxon>
        <taxon>50 kb inversion clade</taxon>
        <taxon>NPAAA clade</taxon>
        <taxon>Hologalegina</taxon>
        <taxon>IRL clade</taxon>
        <taxon>Trifolieae</taxon>
        <taxon>Medicago</taxon>
    </lineage>
</organism>
<name>MSK3_MEDSA</name>
<accession>P51139</accession>
<gene>
    <name type="primary">MSK-3</name>
</gene>
<proteinExistence type="evidence at transcript level"/>
<comment type="catalytic activity">
    <reaction>
        <text>L-seryl-[protein] + ATP = O-phospho-L-seryl-[protein] + ADP + H(+)</text>
        <dbReference type="Rhea" id="RHEA:17989"/>
        <dbReference type="Rhea" id="RHEA-COMP:9863"/>
        <dbReference type="Rhea" id="RHEA-COMP:11604"/>
        <dbReference type="ChEBI" id="CHEBI:15378"/>
        <dbReference type="ChEBI" id="CHEBI:29999"/>
        <dbReference type="ChEBI" id="CHEBI:30616"/>
        <dbReference type="ChEBI" id="CHEBI:83421"/>
        <dbReference type="ChEBI" id="CHEBI:456216"/>
        <dbReference type="EC" id="2.7.11.1"/>
    </reaction>
</comment>
<comment type="catalytic activity">
    <reaction>
        <text>L-threonyl-[protein] + ATP = O-phospho-L-threonyl-[protein] + ADP + H(+)</text>
        <dbReference type="Rhea" id="RHEA:46608"/>
        <dbReference type="Rhea" id="RHEA-COMP:11060"/>
        <dbReference type="Rhea" id="RHEA-COMP:11605"/>
        <dbReference type="ChEBI" id="CHEBI:15378"/>
        <dbReference type="ChEBI" id="CHEBI:30013"/>
        <dbReference type="ChEBI" id="CHEBI:30616"/>
        <dbReference type="ChEBI" id="CHEBI:61977"/>
        <dbReference type="ChEBI" id="CHEBI:456216"/>
        <dbReference type="EC" id="2.7.11.1"/>
    </reaction>
</comment>
<comment type="tissue specificity">
    <text>Absent in leaves and petioles, very low levels are seen in the stems and roots while a moderate expression is seen in the nodes.</text>
</comment>
<comment type="developmental stage">
    <text>High levels are seen in early flower development, gradually decreases in later stages and is absent after fertilization.</text>
</comment>
<comment type="similarity">
    <text evidence="4">Belongs to the protein kinase superfamily. CMGC Ser/Thr protein kinase family. GSK-3 subfamily.</text>
</comment>
<comment type="sequence caution" evidence="4">
    <conflict type="erroneous initiation">
        <sequence resource="EMBL-CDS" id="CAA48472"/>
    </conflict>
</comment>
<dbReference type="EC" id="2.7.11.1"/>
<dbReference type="EMBL" id="X68409">
    <property type="protein sequence ID" value="CAA48472.1"/>
    <property type="status" value="ALT_INIT"/>
    <property type="molecule type" value="mRNA"/>
</dbReference>
<dbReference type="PIR" id="S37642">
    <property type="entry name" value="S37642"/>
</dbReference>
<dbReference type="SMR" id="P51139"/>
<dbReference type="BRENDA" id="2.7.11.26">
    <property type="organism ID" value="3078"/>
</dbReference>
<dbReference type="GO" id="GO:0005737">
    <property type="term" value="C:cytoplasm"/>
    <property type="evidence" value="ECO:0007669"/>
    <property type="project" value="TreeGrafter"/>
</dbReference>
<dbReference type="GO" id="GO:0005634">
    <property type="term" value="C:nucleus"/>
    <property type="evidence" value="ECO:0007669"/>
    <property type="project" value="TreeGrafter"/>
</dbReference>
<dbReference type="GO" id="GO:0005524">
    <property type="term" value="F:ATP binding"/>
    <property type="evidence" value="ECO:0007669"/>
    <property type="project" value="UniProtKB-KW"/>
</dbReference>
<dbReference type="GO" id="GO:0106310">
    <property type="term" value="F:protein serine kinase activity"/>
    <property type="evidence" value="ECO:0007669"/>
    <property type="project" value="RHEA"/>
</dbReference>
<dbReference type="GO" id="GO:0004674">
    <property type="term" value="F:protein serine/threonine kinase activity"/>
    <property type="evidence" value="ECO:0007669"/>
    <property type="project" value="UniProtKB-KW"/>
</dbReference>
<dbReference type="GO" id="GO:0030154">
    <property type="term" value="P:cell differentiation"/>
    <property type="evidence" value="ECO:0007669"/>
    <property type="project" value="TreeGrafter"/>
</dbReference>
<dbReference type="GO" id="GO:0007165">
    <property type="term" value="P:signal transduction"/>
    <property type="evidence" value="ECO:0007669"/>
    <property type="project" value="TreeGrafter"/>
</dbReference>
<dbReference type="CDD" id="cd14137">
    <property type="entry name" value="STKc_GSK3"/>
    <property type="match status" value="1"/>
</dbReference>
<dbReference type="FunFam" id="3.30.200.20:FF:000009">
    <property type="entry name" value="Glycogen synthase kinase-3 beta"/>
    <property type="match status" value="1"/>
</dbReference>
<dbReference type="FunFam" id="1.10.510.10:FF:000082">
    <property type="entry name" value="Shaggy-related protein kinase kappa"/>
    <property type="match status" value="1"/>
</dbReference>
<dbReference type="Gene3D" id="3.30.200.20">
    <property type="entry name" value="Phosphorylase Kinase, domain 1"/>
    <property type="match status" value="1"/>
</dbReference>
<dbReference type="Gene3D" id="1.10.510.10">
    <property type="entry name" value="Transferase(Phosphotransferase) domain 1"/>
    <property type="match status" value="1"/>
</dbReference>
<dbReference type="InterPro" id="IPR050591">
    <property type="entry name" value="GSK-3"/>
</dbReference>
<dbReference type="InterPro" id="IPR011009">
    <property type="entry name" value="Kinase-like_dom_sf"/>
</dbReference>
<dbReference type="InterPro" id="IPR000719">
    <property type="entry name" value="Prot_kinase_dom"/>
</dbReference>
<dbReference type="InterPro" id="IPR017441">
    <property type="entry name" value="Protein_kinase_ATP_BS"/>
</dbReference>
<dbReference type="InterPro" id="IPR008271">
    <property type="entry name" value="Ser/Thr_kinase_AS"/>
</dbReference>
<dbReference type="InterPro" id="IPR039192">
    <property type="entry name" value="STKc_GSK3"/>
</dbReference>
<dbReference type="PANTHER" id="PTHR24057">
    <property type="entry name" value="GLYCOGEN SYNTHASE KINASE-3 ALPHA"/>
    <property type="match status" value="1"/>
</dbReference>
<dbReference type="PANTHER" id="PTHR24057:SF79">
    <property type="entry name" value="NON-SPECIFIC SERINE_THREONINE PROTEIN KINASE"/>
    <property type="match status" value="1"/>
</dbReference>
<dbReference type="Pfam" id="PF00069">
    <property type="entry name" value="Pkinase"/>
    <property type="match status" value="1"/>
</dbReference>
<dbReference type="SMART" id="SM00220">
    <property type="entry name" value="S_TKc"/>
    <property type="match status" value="1"/>
</dbReference>
<dbReference type="SUPFAM" id="SSF56112">
    <property type="entry name" value="Protein kinase-like (PK-like)"/>
    <property type="match status" value="1"/>
</dbReference>
<dbReference type="PROSITE" id="PS00107">
    <property type="entry name" value="PROTEIN_KINASE_ATP"/>
    <property type="match status" value="1"/>
</dbReference>
<dbReference type="PROSITE" id="PS50011">
    <property type="entry name" value="PROTEIN_KINASE_DOM"/>
    <property type="match status" value="1"/>
</dbReference>
<dbReference type="PROSITE" id="PS00108">
    <property type="entry name" value="PROTEIN_KINASE_ST"/>
    <property type="match status" value="1"/>
</dbReference>
<keyword id="KW-0067">ATP-binding</keyword>
<keyword id="KW-0418">Kinase</keyword>
<keyword id="KW-0547">Nucleotide-binding</keyword>
<keyword id="KW-0597">Phosphoprotein</keyword>
<keyword id="KW-0723">Serine/threonine-protein kinase</keyword>
<keyword id="KW-0808">Transferase</keyword>
<feature type="chain" id="PRO_0000086402" description="Glycogen synthase kinase-3 homolog MsK-3">
    <location>
        <begin position="1"/>
        <end position="411"/>
    </location>
</feature>
<feature type="domain" description="Protein kinase" evidence="2">
    <location>
        <begin position="74"/>
        <end position="358"/>
    </location>
</feature>
<feature type="active site" description="Proton acceptor" evidence="2 3">
    <location>
        <position position="199"/>
    </location>
</feature>
<feature type="binding site" evidence="2">
    <location>
        <begin position="80"/>
        <end position="88"/>
    </location>
    <ligand>
        <name>ATP</name>
        <dbReference type="ChEBI" id="CHEBI:30616"/>
    </ligand>
</feature>
<feature type="binding site" evidence="2">
    <location>
        <position position="103"/>
    </location>
    <ligand>
        <name>ATP</name>
        <dbReference type="ChEBI" id="CHEBI:30616"/>
    </ligand>
</feature>
<feature type="modified residue" description="Phosphotyrosine" evidence="1">
    <location>
        <position position="234"/>
    </location>
</feature>
<protein>
    <recommendedName>
        <fullName>Glycogen synthase kinase-3 homolog MsK-3</fullName>
        <ecNumber>2.7.11.1</ecNumber>
    </recommendedName>
</protein>
<evidence type="ECO:0000250" key="1"/>
<evidence type="ECO:0000255" key="2">
    <source>
        <dbReference type="PROSITE-ProRule" id="PRU00159"/>
    </source>
</evidence>
<evidence type="ECO:0000255" key="3">
    <source>
        <dbReference type="PROSITE-ProRule" id="PRU10027"/>
    </source>
</evidence>
<evidence type="ECO:0000305" key="4"/>
<reference key="1">
    <citation type="journal article" date="1993" name="Plant J.">
        <title>The MsK family of alfalfa protein kinase genes encodes homologues of shaggy/glycogen synthase kinase-3 and shows differential expression patterns in plant organs and development.</title>
        <authorList>
            <person name="Paz A."/>
            <person name="Jonak C."/>
            <person name="Boegre L."/>
            <person name="Meskiene I."/>
            <person name="Mairinger T."/>
            <person name="Szalay A."/>
            <person name="Heberle-Bors E."/>
            <person name="Hirt H."/>
        </authorList>
    </citation>
    <scope>NUCLEOTIDE SEQUENCE [MRNA]</scope>
</reference>
<sequence>MASGGVAPASGFIDKNASSVGVEKLPEEMNDMKIRDDKEMEAATIVDGNGTETGHIIVTTIGGKNGQPKQTISYMAERVVGHGSFGVVFQAKCLETGETVAIKKVLQDKRYKNRELQTMRLLDHPNVVSLKHCFFSTTEKDELYLNLVLEYVPETVSRVIRHYNKMNQRMPMIYVKLYSYQICRALAYIHNSIGVCHRDIKPQNLLVNPHTHQLKICDFGSAKVLVKGEPNISYICSRYYRAPELIFGATEYTTAIDIWSAGCVLGELLLGQPLFPGESGVDQLVEIIKVLGTPTREEIKCMNPNYTEFKFPQIKAHPWHKIFHKRMPPEAVDLVSRLLQYSPNLRSTALEALVHPFYDDVRDPNTRLPNGRFLPPLFNFKVNELKGVPAEMLVKLVPPHARKQCALFGSS</sequence>